<geneLocation type="cyanelle"/>
<dbReference type="EMBL" id="U30821">
    <property type="protein sequence ID" value="AAA81241.1"/>
    <property type="molecule type" value="Genomic_DNA"/>
</dbReference>
<dbReference type="PIR" id="T06898">
    <property type="entry name" value="T06898"/>
</dbReference>
<dbReference type="SMR" id="P48326"/>
<dbReference type="GO" id="GO:0009842">
    <property type="term" value="C:cyanelle"/>
    <property type="evidence" value="ECO:0007669"/>
    <property type="project" value="UniProtKB-SubCell"/>
</dbReference>
<dbReference type="GO" id="GO:0051301">
    <property type="term" value="P:cell division"/>
    <property type="evidence" value="ECO:0007669"/>
    <property type="project" value="UniProtKB-KW"/>
</dbReference>
<dbReference type="Gene3D" id="3.30.110.150">
    <property type="entry name" value="SepF-like protein"/>
    <property type="match status" value="1"/>
</dbReference>
<dbReference type="InterPro" id="IPR023052">
    <property type="entry name" value="Cell_div_SepF"/>
</dbReference>
<dbReference type="InterPro" id="IPR007561">
    <property type="entry name" value="Cell_div_SepF/SepF-rel"/>
</dbReference>
<dbReference type="InterPro" id="IPR038594">
    <property type="entry name" value="SepF-like_sf"/>
</dbReference>
<dbReference type="PANTHER" id="PTHR35798">
    <property type="entry name" value="CELL DIVISION PROTEIN SEPF"/>
    <property type="match status" value="1"/>
</dbReference>
<dbReference type="PANTHER" id="PTHR35798:SF1">
    <property type="entry name" value="CELL DIVISION PROTEIN SEPF"/>
    <property type="match status" value="1"/>
</dbReference>
<dbReference type="Pfam" id="PF04472">
    <property type="entry name" value="SepF"/>
    <property type="match status" value="1"/>
</dbReference>
<proteinExistence type="inferred from homology"/>
<keyword id="KW-0131">Cell cycle</keyword>
<keyword id="KW-0132">Cell division</keyword>
<keyword id="KW-0194">Cyanelle</keyword>
<keyword id="KW-0934">Plastid</keyword>
<keyword id="KW-0717">Septation</keyword>
<gene>
    <name type="primary">sepF</name>
    <name type="synonym">ycf50</name>
</gene>
<name>SEPF_CYAPA</name>
<protein>
    <recommendedName>
        <fullName>Cell division protein sepF homolog</fullName>
    </recommendedName>
</protein>
<organism>
    <name type="scientific">Cyanophora paradoxa</name>
    <dbReference type="NCBI Taxonomy" id="2762"/>
    <lineage>
        <taxon>Eukaryota</taxon>
        <taxon>Glaucocystophyceae</taxon>
        <taxon>Cyanophoraceae</taxon>
        <taxon>Cyanophora</taxon>
    </lineage>
</organism>
<comment type="function">
    <text>May act as a cell division protein.</text>
</comment>
<comment type="subcellular location">
    <subcellularLocation>
        <location>Plastid</location>
        <location>Cyanelle</location>
    </subcellularLocation>
</comment>
<comment type="similarity">
    <text evidence="1">Belongs to the SepF family.</text>
</comment>
<reference key="1">
    <citation type="journal article" date="1995" name="Plant Mol. Biol. Rep.">
        <title>Nucleotide sequence of the cyanelle DNA from Cyanophora paradoxa.</title>
        <authorList>
            <person name="Stirewalt V.L."/>
            <person name="Michalowski C.B."/>
            <person name="Loeffelhardt W."/>
            <person name="Bohnert H.J."/>
            <person name="Bryant D.A."/>
        </authorList>
    </citation>
    <scope>NUCLEOTIDE SEQUENCE [LARGE SCALE GENOMIC DNA]</scope>
    <source>
        <strain>UTEX LB 555 / Pringsheim</strain>
    </source>
</reference>
<reference key="2">
    <citation type="book" date="1997" name="Eukaryotism and symbiosis">
        <title>The complete sequence of the cyanelle genome of Cyanophora paradoxa: the genetic complexity of a primitive plastid.</title>
        <editorList>
            <person name="Schenk H.E.A."/>
            <person name="Herrmann R."/>
            <person name="Jeon K.W."/>
            <person name="Mueller N.E."/>
            <person name="Schwemmler W."/>
        </editorList>
        <authorList>
            <person name="Loeffelhardt W."/>
            <person name="Stirewalt V.L."/>
            <person name="Michalowski C.B."/>
            <person name="Annarella M."/>
            <person name="Farley J.Y."/>
            <person name="Schluchter W.M."/>
            <person name="Chung S."/>
            <person name="Newmann-Spallart C."/>
            <person name="Steiner J.M."/>
            <person name="Jakowitsch J."/>
            <person name="Bohnert H.J."/>
            <person name="Bryant D.A."/>
        </authorList>
    </citation>
    <scope>NUCLEOTIDE SEQUENCE [LARGE SCALE GENOMIC DNA]</scope>
    <source>
        <strain>UTEX LB 555 / Pringsheim</strain>
    </source>
</reference>
<accession>P48326</accession>
<evidence type="ECO:0000305" key="1"/>
<sequence length="108" mass="12699">MTFDYTNSFYNYDQYNNKKFDIVVLKPLKEEEIEYYLMQSLDALRINKAVVFNFEHIDYPLAQRILDSLAGATYALGGDKTCIREKLYFFVPKTVKLQAPNNETPSFF</sequence>
<feature type="chain" id="PRO_0000217378" description="Cell division protein sepF homolog">
    <location>
        <begin position="1"/>
        <end position="108"/>
    </location>
</feature>